<sequence>MAKKRGKKYQDALKKVDSKKEYAVDDAVDLVKEIDFANFDATVEVAFNLNVDTKQADQQLRGAIVLPNGTGKDQTVIVFAKGENAKAAQEAGADFVGDQDLVEKIQDGWLDFDVAIATPDMMPQVGRLGRVLGPKGLMPNPKTGTVTMDVAKAVSDAKAGQVTYRTDRDGNVAVPFGKVSFDTAKLVENLKTIEDVVVKARPAAVRGTYIKHASIASTFGPSVTLDLTTF</sequence>
<accession>B2GAC3</accession>
<dbReference type="EMBL" id="AP008937">
    <property type="protein sequence ID" value="BAG26605.1"/>
    <property type="molecule type" value="Genomic_DNA"/>
</dbReference>
<dbReference type="RefSeq" id="WP_012390833.1">
    <property type="nucleotide sequence ID" value="NC_010610.1"/>
</dbReference>
<dbReference type="SMR" id="B2GAC3"/>
<dbReference type="KEGG" id="lfe:LAF_0269"/>
<dbReference type="PATRIC" id="fig|334390.5.peg.300"/>
<dbReference type="eggNOG" id="COG0081">
    <property type="taxonomic scope" value="Bacteria"/>
</dbReference>
<dbReference type="HOGENOM" id="CLU_062853_0_0_9"/>
<dbReference type="Proteomes" id="UP000001697">
    <property type="component" value="Chromosome"/>
</dbReference>
<dbReference type="GO" id="GO:0015934">
    <property type="term" value="C:large ribosomal subunit"/>
    <property type="evidence" value="ECO:0007669"/>
    <property type="project" value="InterPro"/>
</dbReference>
<dbReference type="GO" id="GO:0019843">
    <property type="term" value="F:rRNA binding"/>
    <property type="evidence" value="ECO:0007669"/>
    <property type="project" value="UniProtKB-UniRule"/>
</dbReference>
<dbReference type="GO" id="GO:0003735">
    <property type="term" value="F:structural constituent of ribosome"/>
    <property type="evidence" value="ECO:0007669"/>
    <property type="project" value="InterPro"/>
</dbReference>
<dbReference type="GO" id="GO:0000049">
    <property type="term" value="F:tRNA binding"/>
    <property type="evidence" value="ECO:0007669"/>
    <property type="project" value="UniProtKB-KW"/>
</dbReference>
<dbReference type="GO" id="GO:0006417">
    <property type="term" value="P:regulation of translation"/>
    <property type="evidence" value="ECO:0007669"/>
    <property type="project" value="UniProtKB-KW"/>
</dbReference>
<dbReference type="GO" id="GO:0006412">
    <property type="term" value="P:translation"/>
    <property type="evidence" value="ECO:0007669"/>
    <property type="project" value="UniProtKB-UniRule"/>
</dbReference>
<dbReference type="CDD" id="cd00403">
    <property type="entry name" value="Ribosomal_L1"/>
    <property type="match status" value="1"/>
</dbReference>
<dbReference type="FunFam" id="3.40.50.790:FF:000001">
    <property type="entry name" value="50S ribosomal protein L1"/>
    <property type="match status" value="1"/>
</dbReference>
<dbReference type="Gene3D" id="3.30.190.20">
    <property type="match status" value="1"/>
</dbReference>
<dbReference type="Gene3D" id="3.40.50.790">
    <property type="match status" value="1"/>
</dbReference>
<dbReference type="HAMAP" id="MF_01318_B">
    <property type="entry name" value="Ribosomal_uL1_B"/>
    <property type="match status" value="1"/>
</dbReference>
<dbReference type="InterPro" id="IPR005878">
    <property type="entry name" value="Ribosom_uL1_bac-type"/>
</dbReference>
<dbReference type="InterPro" id="IPR002143">
    <property type="entry name" value="Ribosomal_uL1"/>
</dbReference>
<dbReference type="InterPro" id="IPR023674">
    <property type="entry name" value="Ribosomal_uL1-like"/>
</dbReference>
<dbReference type="InterPro" id="IPR028364">
    <property type="entry name" value="Ribosomal_uL1/biogenesis"/>
</dbReference>
<dbReference type="InterPro" id="IPR016095">
    <property type="entry name" value="Ribosomal_uL1_3-a/b-sand"/>
</dbReference>
<dbReference type="InterPro" id="IPR023673">
    <property type="entry name" value="Ribosomal_uL1_CS"/>
</dbReference>
<dbReference type="NCBIfam" id="TIGR01169">
    <property type="entry name" value="rplA_bact"/>
    <property type="match status" value="1"/>
</dbReference>
<dbReference type="PANTHER" id="PTHR36427">
    <property type="entry name" value="54S RIBOSOMAL PROTEIN L1, MITOCHONDRIAL"/>
    <property type="match status" value="1"/>
</dbReference>
<dbReference type="PANTHER" id="PTHR36427:SF3">
    <property type="entry name" value="LARGE RIBOSOMAL SUBUNIT PROTEIN UL1M"/>
    <property type="match status" value="1"/>
</dbReference>
<dbReference type="Pfam" id="PF00687">
    <property type="entry name" value="Ribosomal_L1"/>
    <property type="match status" value="1"/>
</dbReference>
<dbReference type="PIRSF" id="PIRSF002155">
    <property type="entry name" value="Ribosomal_L1"/>
    <property type="match status" value="1"/>
</dbReference>
<dbReference type="SUPFAM" id="SSF56808">
    <property type="entry name" value="Ribosomal protein L1"/>
    <property type="match status" value="1"/>
</dbReference>
<dbReference type="PROSITE" id="PS01199">
    <property type="entry name" value="RIBOSOMAL_L1"/>
    <property type="match status" value="1"/>
</dbReference>
<comment type="function">
    <text evidence="1">Binds directly to 23S rRNA. The L1 stalk is quite mobile in the ribosome, and is involved in E site tRNA release.</text>
</comment>
<comment type="function">
    <text evidence="1">Protein L1 is also a translational repressor protein, it controls the translation of the L11 operon by binding to its mRNA.</text>
</comment>
<comment type="subunit">
    <text evidence="1">Part of the 50S ribosomal subunit.</text>
</comment>
<comment type="similarity">
    <text evidence="1">Belongs to the universal ribosomal protein uL1 family.</text>
</comment>
<organism>
    <name type="scientific">Limosilactobacillus fermentum (strain NBRC 3956 / LMG 18251)</name>
    <name type="common">Lactobacillus fermentum</name>
    <dbReference type="NCBI Taxonomy" id="334390"/>
    <lineage>
        <taxon>Bacteria</taxon>
        <taxon>Bacillati</taxon>
        <taxon>Bacillota</taxon>
        <taxon>Bacilli</taxon>
        <taxon>Lactobacillales</taxon>
        <taxon>Lactobacillaceae</taxon>
        <taxon>Limosilactobacillus</taxon>
    </lineage>
</organism>
<proteinExistence type="inferred from homology"/>
<feature type="chain" id="PRO_1000141419" description="Large ribosomal subunit protein uL1">
    <location>
        <begin position="1"/>
        <end position="230"/>
    </location>
</feature>
<protein>
    <recommendedName>
        <fullName evidence="1">Large ribosomal subunit protein uL1</fullName>
    </recommendedName>
    <alternativeName>
        <fullName evidence="2">50S ribosomal protein L1</fullName>
    </alternativeName>
</protein>
<evidence type="ECO:0000255" key="1">
    <source>
        <dbReference type="HAMAP-Rule" id="MF_01318"/>
    </source>
</evidence>
<evidence type="ECO:0000305" key="2"/>
<name>RL1_LIMF3</name>
<gene>
    <name evidence="1" type="primary">rplA</name>
    <name type="ordered locus">LAF_0269</name>
</gene>
<keyword id="KW-1185">Reference proteome</keyword>
<keyword id="KW-0678">Repressor</keyword>
<keyword id="KW-0687">Ribonucleoprotein</keyword>
<keyword id="KW-0689">Ribosomal protein</keyword>
<keyword id="KW-0694">RNA-binding</keyword>
<keyword id="KW-0699">rRNA-binding</keyword>
<keyword id="KW-0810">Translation regulation</keyword>
<keyword id="KW-0820">tRNA-binding</keyword>
<reference key="1">
    <citation type="journal article" date="2008" name="DNA Res.">
        <title>Comparative genome analysis of Lactobacillus reuteri and Lactobacillus fermentum reveal a genomic island for reuterin and cobalamin production.</title>
        <authorList>
            <person name="Morita H."/>
            <person name="Toh H."/>
            <person name="Fukuda S."/>
            <person name="Horikawa H."/>
            <person name="Oshima K."/>
            <person name="Suzuki T."/>
            <person name="Murakami M."/>
            <person name="Hisamatsu S."/>
            <person name="Kato Y."/>
            <person name="Takizawa T."/>
            <person name="Fukuoka H."/>
            <person name="Yoshimura T."/>
            <person name="Itoh K."/>
            <person name="O'Sullivan D.J."/>
            <person name="McKay L.L."/>
            <person name="Ohno H."/>
            <person name="Kikuchi J."/>
            <person name="Masaoka T."/>
            <person name="Hattori M."/>
        </authorList>
    </citation>
    <scope>NUCLEOTIDE SEQUENCE [LARGE SCALE GENOMIC DNA]</scope>
    <source>
        <strain>NBRC 3956 / LMG 18251</strain>
    </source>
</reference>